<dbReference type="EC" id="2.3.1.129" evidence="1"/>
<dbReference type="EMBL" id="CU928163">
    <property type="protein sequence ID" value="CAR11398.1"/>
    <property type="molecule type" value="Genomic_DNA"/>
</dbReference>
<dbReference type="RefSeq" id="WP_000565966.1">
    <property type="nucleotide sequence ID" value="NC_011751.1"/>
</dbReference>
<dbReference type="RefSeq" id="YP_002410954.1">
    <property type="nucleotide sequence ID" value="NC_011751.1"/>
</dbReference>
<dbReference type="SMR" id="B7N848"/>
<dbReference type="STRING" id="585056.ECUMN_0178"/>
<dbReference type="GeneID" id="93777244"/>
<dbReference type="KEGG" id="eum:ECUMN_0178"/>
<dbReference type="PATRIC" id="fig|585056.7.peg.372"/>
<dbReference type="HOGENOM" id="CLU_061249_0_0_6"/>
<dbReference type="UniPathway" id="UPA00359">
    <property type="reaction ID" value="UER00477"/>
</dbReference>
<dbReference type="Proteomes" id="UP000007097">
    <property type="component" value="Chromosome"/>
</dbReference>
<dbReference type="GO" id="GO:0005737">
    <property type="term" value="C:cytoplasm"/>
    <property type="evidence" value="ECO:0007669"/>
    <property type="project" value="UniProtKB-SubCell"/>
</dbReference>
<dbReference type="GO" id="GO:0016020">
    <property type="term" value="C:membrane"/>
    <property type="evidence" value="ECO:0007669"/>
    <property type="project" value="GOC"/>
</dbReference>
<dbReference type="GO" id="GO:0008780">
    <property type="term" value="F:acyl-[acyl-carrier-protein]-UDP-N-acetylglucosamine O-acyltransferase activity"/>
    <property type="evidence" value="ECO:0007669"/>
    <property type="project" value="UniProtKB-UniRule"/>
</dbReference>
<dbReference type="GO" id="GO:0009245">
    <property type="term" value="P:lipid A biosynthetic process"/>
    <property type="evidence" value="ECO:0007669"/>
    <property type="project" value="UniProtKB-UniRule"/>
</dbReference>
<dbReference type="CDD" id="cd03351">
    <property type="entry name" value="LbH_UDP-GlcNAc_AT"/>
    <property type="match status" value="1"/>
</dbReference>
<dbReference type="FunFam" id="1.20.1180.10:FF:000001">
    <property type="entry name" value="Acyl-[acyl-carrier-protein]--UDP-N-acetylglucosamine O-acyltransferase"/>
    <property type="match status" value="1"/>
</dbReference>
<dbReference type="FunFam" id="2.160.10.10:FF:000003">
    <property type="entry name" value="Acyl-[acyl-carrier-protein]--UDP-N-acetylglucosamine O-acyltransferase"/>
    <property type="match status" value="1"/>
</dbReference>
<dbReference type="Gene3D" id="2.160.10.10">
    <property type="entry name" value="Hexapeptide repeat proteins"/>
    <property type="match status" value="1"/>
</dbReference>
<dbReference type="Gene3D" id="1.20.1180.10">
    <property type="entry name" value="Udp N-acetylglucosamine O-acyltransferase, C-terminal domain"/>
    <property type="match status" value="1"/>
</dbReference>
<dbReference type="HAMAP" id="MF_00387">
    <property type="entry name" value="LpxA"/>
    <property type="match status" value="1"/>
</dbReference>
<dbReference type="InterPro" id="IPR029098">
    <property type="entry name" value="Acetyltransf_C"/>
</dbReference>
<dbReference type="InterPro" id="IPR037157">
    <property type="entry name" value="Acetyltransf_C_sf"/>
</dbReference>
<dbReference type="InterPro" id="IPR001451">
    <property type="entry name" value="Hexapep"/>
</dbReference>
<dbReference type="InterPro" id="IPR018357">
    <property type="entry name" value="Hexapep_transf_CS"/>
</dbReference>
<dbReference type="InterPro" id="IPR010137">
    <property type="entry name" value="Lipid_A_LpxA"/>
</dbReference>
<dbReference type="InterPro" id="IPR011004">
    <property type="entry name" value="Trimer_LpxA-like_sf"/>
</dbReference>
<dbReference type="NCBIfam" id="TIGR01852">
    <property type="entry name" value="lipid_A_lpxA"/>
    <property type="match status" value="1"/>
</dbReference>
<dbReference type="NCBIfam" id="NF003657">
    <property type="entry name" value="PRK05289.1"/>
    <property type="match status" value="1"/>
</dbReference>
<dbReference type="PANTHER" id="PTHR43480">
    <property type="entry name" value="ACYL-[ACYL-CARRIER-PROTEIN]--UDP-N-ACETYLGLUCOSAMINE O-ACYLTRANSFERASE"/>
    <property type="match status" value="1"/>
</dbReference>
<dbReference type="PANTHER" id="PTHR43480:SF1">
    <property type="entry name" value="ACYL-[ACYL-CARRIER-PROTEIN]--UDP-N-ACETYLGLUCOSAMINE O-ACYLTRANSFERASE, MITOCHONDRIAL-RELATED"/>
    <property type="match status" value="1"/>
</dbReference>
<dbReference type="Pfam" id="PF13720">
    <property type="entry name" value="Acetyltransf_11"/>
    <property type="match status" value="1"/>
</dbReference>
<dbReference type="Pfam" id="PF00132">
    <property type="entry name" value="Hexapep"/>
    <property type="match status" value="2"/>
</dbReference>
<dbReference type="PIRSF" id="PIRSF000456">
    <property type="entry name" value="UDP-GlcNAc_acltr"/>
    <property type="match status" value="1"/>
</dbReference>
<dbReference type="SUPFAM" id="SSF51161">
    <property type="entry name" value="Trimeric LpxA-like enzymes"/>
    <property type="match status" value="1"/>
</dbReference>
<dbReference type="PROSITE" id="PS00101">
    <property type="entry name" value="HEXAPEP_TRANSFERASES"/>
    <property type="match status" value="2"/>
</dbReference>
<protein>
    <recommendedName>
        <fullName evidence="1">Acyl-[acyl-carrier-protein]--UDP-N-acetylglucosamine O-acyltransferase</fullName>
        <shortName evidence="1">UDP-N-acetylglucosamine acyltransferase</shortName>
        <ecNumber evidence="1">2.3.1.129</ecNumber>
    </recommendedName>
</protein>
<comment type="function">
    <text evidence="1">Involved in the biosynthesis of lipid A, a phosphorylated glycolipid that anchors the lipopolysaccharide to the outer membrane of the cell.</text>
</comment>
<comment type="catalytic activity">
    <reaction evidence="1">
        <text>a (3R)-hydroxyacyl-[ACP] + UDP-N-acetyl-alpha-D-glucosamine = a UDP-3-O-[(3R)-3-hydroxyacyl]-N-acetyl-alpha-D-glucosamine + holo-[ACP]</text>
        <dbReference type="Rhea" id="RHEA:67812"/>
        <dbReference type="Rhea" id="RHEA-COMP:9685"/>
        <dbReference type="Rhea" id="RHEA-COMP:9945"/>
        <dbReference type="ChEBI" id="CHEBI:57705"/>
        <dbReference type="ChEBI" id="CHEBI:64479"/>
        <dbReference type="ChEBI" id="CHEBI:78827"/>
        <dbReference type="ChEBI" id="CHEBI:173225"/>
        <dbReference type="EC" id="2.3.1.129"/>
    </reaction>
</comment>
<comment type="pathway">
    <text evidence="1">Glycolipid biosynthesis; lipid IV(A) biosynthesis; lipid IV(A) from (3R)-3-hydroxytetradecanoyl-[acyl-carrier-protein] and UDP-N-acetyl-alpha-D-glucosamine: step 1/6.</text>
</comment>
<comment type="subunit">
    <text evidence="1">Homotrimer.</text>
</comment>
<comment type="subcellular location">
    <subcellularLocation>
        <location evidence="1">Cytoplasm</location>
    </subcellularLocation>
</comment>
<comment type="similarity">
    <text evidence="1">Belongs to the transferase hexapeptide repeat family. LpxA subfamily.</text>
</comment>
<proteinExistence type="inferred from homology"/>
<organism>
    <name type="scientific">Escherichia coli O17:K52:H18 (strain UMN026 / ExPEC)</name>
    <dbReference type="NCBI Taxonomy" id="585056"/>
    <lineage>
        <taxon>Bacteria</taxon>
        <taxon>Pseudomonadati</taxon>
        <taxon>Pseudomonadota</taxon>
        <taxon>Gammaproteobacteria</taxon>
        <taxon>Enterobacterales</taxon>
        <taxon>Enterobacteriaceae</taxon>
        <taxon>Escherichia</taxon>
    </lineage>
</organism>
<gene>
    <name evidence="1" type="primary">lpxA</name>
    <name type="ordered locus">ECUMN_0178</name>
</gene>
<name>LPXA_ECOLU</name>
<evidence type="ECO:0000255" key="1">
    <source>
        <dbReference type="HAMAP-Rule" id="MF_00387"/>
    </source>
</evidence>
<keyword id="KW-0012">Acyltransferase</keyword>
<keyword id="KW-0963">Cytoplasm</keyword>
<keyword id="KW-0441">Lipid A biosynthesis</keyword>
<keyword id="KW-0444">Lipid biosynthesis</keyword>
<keyword id="KW-0443">Lipid metabolism</keyword>
<keyword id="KW-0677">Repeat</keyword>
<keyword id="KW-0808">Transferase</keyword>
<sequence>MIDKSAFVHPTAIVEEGASIGANAHIGPFCIVGPHVEIGEGTVLKSHVVVNGHTKIGRDNEIYQFASIGEVNQDLKYAGEPTRVEIGDRNRIRESVTIHRGTVQGGGLTKVGSDNLLMINAHIAHDCTVGNRCILANNATLAGHVSVDDFAIIGGMTAVHQFCIIGAHVMVGGCSGVAQDVPPYVIAQGNHATPFGVNIEGLKRRGFSREAITAIRNAYKLIYRSGKTLDEVKPEIAELAETYPEVKAFTDFFARSTRGLIR</sequence>
<feature type="chain" id="PRO_1000122705" description="Acyl-[acyl-carrier-protein]--UDP-N-acetylglucosamine O-acyltransferase">
    <location>
        <begin position="1"/>
        <end position="262"/>
    </location>
</feature>
<reference key="1">
    <citation type="journal article" date="2009" name="PLoS Genet.">
        <title>Organised genome dynamics in the Escherichia coli species results in highly diverse adaptive paths.</title>
        <authorList>
            <person name="Touchon M."/>
            <person name="Hoede C."/>
            <person name="Tenaillon O."/>
            <person name="Barbe V."/>
            <person name="Baeriswyl S."/>
            <person name="Bidet P."/>
            <person name="Bingen E."/>
            <person name="Bonacorsi S."/>
            <person name="Bouchier C."/>
            <person name="Bouvet O."/>
            <person name="Calteau A."/>
            <person name="Chiapello H."/>
            <person name="Clermont O."/>
            <person name="Cruveiller S."/>
            <person name="Danchin A."/>
            <person name="Diard M."/>
            <person name="Dossat C."/>
            <person name="Karoui M.E."/>
            <person name="Frapy E."/>
            <person name="Garry L."/>
            <person name="Ghigo J.M."/>
            <person name="Gilles A.M."/>
            <person name="Johnson J."/>
            <person name="Le Bouguenec C."/>
            <person name="Lescat M."/>
            <person name="Mangenot S."/>
            <person name="Martinez-Jehanne V."/>
            <person name="Matic I."/>
            <person name="Nassif X."/>
            <person name="Oztas S."/>
            <person name="Petit M.A."/>
            <person name="Pichon C."/>
            <person name="Rouy Z."/>
            <person name="Ruf C.S."/>
            <person name="Schneider D."/>
            <person name="Tourret J."/>
            <person name="Vacherie B."/>
            <person name="Vallenet D."/>
            <person name="Medigue C."/>
            <person name="Rocha E.P.C."/>
            <person name="Denamur E."/>
        </authorList>
    </citation>
    <scope>NUCLEOTIDE SEQUENCE [LARGE SCALE GENOMIC DNA]</scope>
    <source>
        <strain>UMN026 / ExPEC</strain>
    </source>
</reference>
<accession>B7N848</accession>